<comment type="subcellular location">
    <subcellularLocation>
        <location evidence="3">Cell membrane</location>
        <topology evidence="3">Multi-pass membrane protein</topology>
    </subcellularLocation>
</comment>
<feature type="chain" id="PRO_0000427464" description="Uncharacterized protein MT2145">
    <location>
        <begin position="1"/>
        <end position="314"/>
    </location>
</feature>
<feature type="transmembrane region" description="Helical" evidence="1">
    <location>
        <begin position="23"/>
        <end position="43"/>
    </location>
</feature>
<feature type="transmembrane region" description="Helical" evidence="1">
    <location>
        <begin position="98"/>
        <end position="118"/>
    </location>
</feature>
<feature type="transmembrane region" description="Helical" evidence="1">
    <location>
        <begin position="221"/>
        <end position="241"/>
    </location>
</feature>
<feature type="region of interest" description="Disordered" evidence="2">
    <location>
        <begin position="165"/>
        <end position="314"/>
    </location>
</feature>
<feature type="compositionally biased region" description="Gly residues" evidence="2">
    <location>
        <begin position="165"/>
        <end position="184"/>
    </location>
</feature>
<feature type="compositionally biased region" description="Pro residues" evidence="2">
    <location>
        <begin position="190"/>
        <end position="202"/>
    </location>
</feature>
<feature type="compositionally biased region" description="Low complexity" evidence="2">
    <location>
        <begin position="203"/>
        <end position="212"/>
    </location>
</feature>
<feature type="compositionally biased region" description="Low complexity" evidence="2">
    <location>
        <begin position="219"/>
        <end position="232"/>
    </location>
</feature>
<feature type="compositionally biased region" description="Basic and acidic residues" evidence="2">
    <location>
        <begin position="294"/>
        <end position="314"/>
    </location>
</feature>
<reference key="1">
    <citation type="journal article" date="2002" name="J. Bacteriol.">
        <title>Whole-genome comparison of Mycobacterium tuberculosis clinical and laboratory strains.</title>
        <authorList>
            <person name="Fleischmann R.D."/>
            <person name="Alland D."/>
            <person name="Eisen J.A."/>
            <person name="Carpenter L."/>
            <person name="White O."/>
            <person name="Peterson J.D."/>
            <person name="DeBoy R.T."/>
            <person name="Dodson R.J."/>
            <person name="Gwinn M.L."/>
            <person name="Haft D.H."/>
            <person name="Hickey E.K."/>
            <person name="Kolonay J.F."/>
            <person name="Nelson W.C."/>
            <person name="Umayam L.A."/>
            <person name="Ermolaeva M.D."/>
            <person name="Salzberg S.L."/>
            <person name="Delcher A."/>
            <person name="Utterback T.R."/>
            <person name="Weidman J.F."/>
            <person name="Khouri H.M."/>
            <person name="Gill J."/>
            <person name="Mikula A."/>
            <person name="Bishai W."/>
            <person name="Jacobs W.R. Jr."/>
            <person name="Venter J.C."/>
            <person name="Fraser C.M."/>
        </authorList>
    </citation>
    <scope>NUCLEOTIDE SEQUENCE [LARGE SCALE GENOMIC DNA]</scope>
    <source>
        <strain>CDC 1551 / Oshkosh</strain>
    </source>
</reference>
<keyword id="KW-1003">Cell membrane</keyword>
<keyword id="KW-0472">Membrane</keyword>
<keyword id="KW-1185">Reference proteome</keyword>
<keyword id="KW-0812">Transmembrane</keyword>
<keyword id="KW-1133">Transmembrane helix</keyword>
<organism>
    <name type="scientific">Mycobacterium tuberculosis (strain CDC 1551 / Oshkosh)</name>
    <dbReference type="NCBI Taxonomy" id="83331"/>
    <lineage>
        <taxon>Bacteria</taxon>
        <taxon>Bacillati</taxon>
        <taxon>Actinomycetota</taxon>
        <taxon>Actinomycetes</taxon>
        <taxon>Mycobacteriales</taxon>
        <taxon>Mycobacteriaceae</taxon>
        <taxon>Mycobacterium</taxon>
        <taxon>Mycobacterium tuberculosis complex</taxon>
    </lineage>
</organism>
<proteinExistence type="predicted"/>
<evidence type="ECO:0000255" key="1"/>
<evidence type="ECO:0000256" key="2">
    <source>
        <dbReference type="SAM" id="MobiDB-lite"/>
    </source>
</evidence>
<evidence type="ECO:0000305" key="3"/>
<sequence length="314" mass="30760">MTSIESHPEQYWAAAGRPGPVPLALGPVHPGGPTLIDLLMALFGLSTNADLGGANADIEGDDTDRRAHAADAARKFSANEANAAEQMQGVGAQGMAQMASGIGGALSGALGGVMGPLTQLPQQAMQAGQGAMQPLMSAMQQAQGADGLAAVDGARLLDSIGGEPGLGSGAGGGDVGGGGAGGTTPTGYLGPPPVPTSSPPTTPAGAPTKSATMPPPGGASPASAHMGAAGMPMVPPGAMGARGEGSGQEKPVEKRVTAPAVPNGQPVKGRLTVPPSAPTTKPTDGKPVVRRRILLPEHKDFGRIAPDEKTDAGE</sequence>
<protein>
    <recommendedName>
        <fullName>Uncharacterized protein MT2145</fullName>
    </recommendedName>
</protein>
<accession>P9WLK2</accession>
<accession>L0T8R1</accession>
<accession>Q10691</accession>
<dbReference type="EMBL" id="AE000516">
    <property type="protein sequence ID" value="AAK46427.1"/>
    <property type="molecule type" value="Genomic_DNA"/>
</dbReference>
<dbReference type="PIR" id="F70766">
    <property type="entry name" value="F70766"/>
</dbReference>
<dbReference type="RefSeq" id="WP_003900461.1">
    <property type="nucleotide sequence ID" value="NZ_KK341227.1"/>
</dbReference>
<dbReference type="KEGG" id="mtc:MT2145"/>
<dbReference type="PATRIC" id="fig|83331.31.peg.2314"/>
<dbReference type="HOGENOM" id="CLU_067537_0_1_11"/>
<dbReference type="Proteomes" id="UP000001020">
    <property type="component" value="Chromosome"/>
</dbReference>
<dbReference type="GO" id="GO:0005886">
    <property type="term" value="C:plasma membrane"/>
    <property type="evidence" value="ECO:0007669"/>
    <property type="project" value="UniProtKB-SubCell"/>
</dbReference>
<name>Y2083_MYCTO</name>
<gene>
    <name type="ordered locus">MT2145</name>
</gene>